<reference key="1">
    <citation type="journal article" date="2018" name="J. Proteomics">
        <title>Profiling the short, linear, non-disulfide bond-containing peptidome from the venom of the scorpion Tityus obscurus.</title>
        <authorList>
            <person name="Dias N.B."/>
            <person name="de Souza B.M."/>
            <person name="Cocchi F.K."/>
            <person name="Chalkidis H.M."/>
            <person name="Dorce V.A.C."/>
            <person name="Palma M.S."/>
        </authorList>
    </citation>
    <scope>PROTEIN SEQUENCE</scope>
    <scope>IDENTIFICATION BY MASS SPECTROMETRY</scope>
    <scope>SUBCELLULAR LOCATION</scope>
    <scope>SYNTHESIS</scope>
    <scope>FUNCTION</scope>
    <scope>BIOASSAY</scope>
    <source>
        <tissue>Venom</tissue>
    </source>
</reference>
<proteinExistence type="evidence at protein level"/>
<protein>
    <recommendedName>
        <fullName evidence="2">Cryptide Pep-6</fullName>
    </recommendedName>
</protein>
<organism>
    <name type="scientific">Tityus obscurus</name>
    <name type="common">Amazonian scorpion</name>
    <name type="synonym">Tityus cambridgei</name>
    <dbReference type="NCBI Taxonomy" id="1221240"/>
    <lineage>
        <taxon>Eukaryota</taxon>
        <taxon>Metazoa</taxon>
        <taxon>Ecdysozoa</taxon>
        <taxon>Arthropoda</taxon>
        <taxon>Chelicerata</taxon>
        <taxon>Arachnida</taxon>
        <taxon>Scorpiones</taxon>
        <taxon>Buthida</taxon>
        <taxon>Buthoidea</taxon>
        <taxon>Buthidae</taxon>
        <taxon>Tityus</taxon>
    </lineage>
</organism>
<dbReference type="GO" id="GO:0005576">
    <property type="term" value="C:extracellular region"/>
    <property type="evidence" value="ECO:0007669"/>
    <property type="project" value="UniProtKB-SubCell"/>
</dbReference>
<dbReference type="GO" id="GO:0031640">
    <property type="term" value="P:killing of cells of another organism"/>
    <property type="evidence" value="ECO:0007669"/>
    <property type="project" value="UniProtKB-KW"/>
</dbReference>
<comment type="function">
    <text evidence="1">Presents weak hemolytic activity at physiological concentrations (micromolar range). Does not induce mast cell degranulation, weak lactate dehydrogenase (LDH) release from mast cells and antimicrobial effects. In vivo, injection into mice induces increase in nociceptive sensibility, but causes very reduced or no edema formation. It also causes no alteration in rearing (standing on hind limbs) and does not impact locomotion.</text>
</comment>
<comment type="subcellular location">
    <subcellularLocation>
        <location evidence="1">Secreted</location>
    </subcellularLocation>
</comment>
<comment type="tissue specificity">
    <text evidence="3">Expressed by the venom gland.</text>
</comment>
<name>CRY6_TITOB</name>
<accession>P0DRF1</accession>
<feature type="peptide" id="PRO_0000461741" description="Cryptide Pep-6" evidence="1">
    <location>
        <begin position="1"/>
        <end position="9"/>
    </location>
</feature>
<sequence length="9" mass="1068">WPNKIEPGK</sequence>
<keyword id="KW-0204">Cytolysis</keyword>
<keyword id="KW-0903">Direct protein sequencing</keyword>
<keyword id="KW-0964">Secreted</keyword>
<evidence type="ECO:0000269" key="1">
    <source>
    </source>
</evidence>
<evidence type="ECO:0000303" key="2">
    <source>
    </source>
</evidence>
<evidence type="ECO:0000305" key="3">
    <source>
    </source>
</evidence>